<reference key="1">
    <citation type="submission" date="2003-10" db="EMBL/GenBank/DDBJ databases">
        <title>The complete genome sequence of the alkaliphilic Bacillus clausii KSM-K16.</title>
        <authorList>
            <person name="Takaki Y."/>
            <person name="Kageyama Y."/>
            <person name="Shimamura S."/>
            <person name="Suzuki H."/>
            <person name="Nishi S."/>
            <person name="Hatada Y."/>
            <person name="Kawai S."/>
            <person name="Ito S."/>
            <person name="Horikoshi K."/>
        </authorList>
    </citation>
    <scope>NUCLEOTIDE SEQUENCE [LARGE SCALE GENOMIC DNA]</scope>
    <source>
        <strain>KSM-K16</strain>
    </source>
</reference>
<sequence length="143" mass="16937">MPTPSMEDYLERIYMLIEEKGYARVSDIAEALEVHPSSVTKMVQKLDKSDYLVYERYRGLVLTAKGNKIGKRLVYRHELLEDFMKIIGVDDTHIYKDVEGIEHHISWDAIDRIGDLVQYFQENQTRIDDLREIQKRNDFPEDE</sequence>
<feature type="chain" id="PRO_0000285040" description="HTH-type transcriptional regulator MntR">
    <location>
        <begin position="1"/>
        <end position="143"/>
    </location>
</feature>
<feature type="domain" description="HTH dtxR-type" evidence="1">
    <location>
        <begin position="1"/>
        <end position="63"/>
    </location>
</feature>
<feature type="binding site" evidence="1">
    <location>
        <position position="8"/>
    </location>
    <ligand>
        <name>Mn(2+)</name>
        <dbReference type="ChEBI" id="CHEBI:29035"/>
        <label>1</label>
    </ligand>
</feature>
<feature type="binding site" evidence="1">
    <location>
        <position position="11"/>
    </location>
    <ligand>
        <name>Mn(2+)</name>
        <dbReference type="ChEBI" id="CHEBI:29035"/>
        <label>2</label>
    </ligand>
</feature>
<feature type="binding site" evidence="1">
    <location>
        <position position="77"/>
    </location>
    <ligand>
        <name>Mn(2+)</name>
        <dbReference type="ChEBI" id="CHEBI:29035"/>
        <label>2</label>
    </ligand>
</feature>
<feature type="binding site" evidence="1">
    <location>
        <position position="99"/>
    </location>
    <ligand>
        <name>Mn(2+)</name>
        <dbReference type="ChEBI" id="CHEBI:29035"/>
        <label>1</label>
    </ligand>
</feature>
<feature type="binding site" evidence="1">
    <location>
        <position position="99"/>
    </location>
    <ligand>
        <name>Mn(2+)</name>
        <dbReference type="ChEBI" id="CHEBI:29035"/>
        <label>2</label>
    </ligand>
</feature>
<feature type="binding site" evidence="1">
    <location>
        <position position="102"/>
    </location>
    <ligand>
        <name>Mn(2+)</name>
        <dbReference type="ChEBI" id="CHEBI:29035"/>
        <label>1</label>
    </ligand>
</feature>
<feature type="binding site" evidence="1">
    <location>
        <position position="102"/>
    </location>
    <ligand>
        <name>Mn(2+)</name>
        <dbReference type="ChEBI" id="CHEBI:29035"/>
        <label>2</label>
    </ligand>
</feature>
<feature type="binding site" evidence="1">
    <location>
        <position position="103"/>
    </location>
    <ligand>
        <name>Mn(2+)</name>
        <dbReference type="ChEBI" id="CHEBI:29035"/>
        <label>1</label>
    </ligand>
</feature>
<protein>
    <recommendedName>
        <fullName evidence="1">HTH-type transcriptional regulator MntR</fullName>
    </recommendedName>
    <alternativeName>
        <fullName evidence="1">Manganese transport regulator</fullName>
    </alternativeName>
</protein>
<proteinExistence type="inferred from homology"/>
<name>MNTR_SHOC1</name>
<keyword id="KW-0010">Activator</keyword>
<keyword id="KW-0963">Cytoplasm</keyword>
<keyword id="KW-0238">DNA-binding</keyword>
<keyword id="KW-0464">Manganese</keyword>
<keyword id="KW-0479">Metal-binding</keyword>
<keyword id="KW-1185">Reference proteome</keyword>
<keyword id="KW-0678">Repressor</keyword>
<keyword id="KW-0804">Transcription</keyword>
<keyword id="KW-0805">Transcription regulation</keyword>
<dbReference type="EMBL" id="AP006627">
    <property type="protein sequence ID" value="BAD65022.1"/>
    <property type="molecule type" value="Genomic_DNA"/>
</dbReference>
<dbReference type="RefSeq" id="WP_011247330.1">
    <property type="nucleotide sequence ID" value="NC_006582.1"/>
</dbReference>
<dbReference type="SMR" id="Q5WF38"/>
<dbReference type="STRING" id="66692.ABC2487"/>
<dbReference type="KEGG" id="bcl:ABC2487"/>
<dbReference type="eggNOG" id="COG1321">
    <property type="taxonomic scope" value="Bacteria"/>
</dbReference>
<dbReference type="HOGENOM" id="CLU_069532_3_0_9"/>
<dbReference type="OrthoDB" id="9791355at2"/>
<dbReference type="Proteomes" id="UP000001168">
    <property type="component" value="Chromosome"/>
</dbReference>
<dbReference type="GO" id="GO:0005737">
    <property type="term" value="C:cytoplasm"/>
    <property type="evidence" value="ECO:0007669"/>
    <property type="project" value="UniProtKB-SubCell"/>
</dbReference>
<dbReference type="GO" id="GO:0003677">
    <property type="term" value="F:DNA binding"/>
    <property type="evidence" value="ECO:0007669"/>
    <property type="project" value="UniProtKB-KW"/>
</dbReference>
<dbReference type="GO" id="GO:0003700">
    <property type="term" value="F:DNA-binding transcription factor activity"/>
    <property type="evidence" value="ECO:0007669"/>
    <property type="project" value="UniProtKB-UniRule"/>
</dbReference>
<dbReference type="GO" id="GO:0030145">
    <property type="term" value="F:manganese ion binding"/>
    <property type="evidence" value="ECO:0007669"/>
    <property type="project" value="UniProtKB-UniRule"/>
</dbReference>
<dbReference type="GO" id="GO:0046983">
    <property type="term" value="F:protein dimerization activity"/>
    <property type="evidence" value="ECO:0007669"/>
    <property type="project" value="InterPro"/>
</dbReference>
<dbReference type="GO" id="GO:0030026">
    <property type="term" value="P:intracellular manganese ion homeostasis"/>
    <property type="evidence" value="ECO:0007669"/>
    <property type="project" value="UniProtKB-UniRule"/>
</dbReference>
<dbReference type="FunFam" id="1.10.10.10:FF:000189">
    <property type="entry name" value="HTH-type transcriptional regulator MntR"/>
    <property type="match status" value="1"/>
</dbReference>
<dbReference type="Gene3D" id="1.10.60.10">
    <property type="entry name" value="Iron dependent repressor, metal binding and dimerisation domain"/>
    <property type="match status" value="1"/>
</dbReference>
<dbReference type="Gene3D" id="1.10.10.10">
    <property type="entry name" value="Winged helix-like DNA-binding domain superfamily/Winged helix DNA-binding domain"/>
    <property type="match status" value="1"/>
</dbReference>
<dbReference type="HAMAP" id="MF_00732">
    <property type="entry name" value="HTH_MntR"/>
    <property type="match status" value="1"/>
</dbReference>
<dbReference type="InterPro" id="IPR050536">
    <property type="entry name" value="DtxR_MntR_Metal-Reg"/>
</dbReference>
<dbReference type="InterPro" id="IPR001367">
    <property type="entry name" value="Fe_dep_repressor"/>
</dbReference>
<dbReference type="InterPro" id="IPR036421">
    <property type="entry name" value="Fe_dep_repressor_sf"/>
</dbReference>
<dbReference type="InterPro" id="IPR022687">
    <property type="entry name" value="HTH_DTXR"/>
</dbReference>
<dbReference type="InterPro" id="IPR022897">
    <property type="entry name" value="HTH_tscrpt_reg_MntR"/>
</dbReference>
<dbReference type="InterPro" id="IPR022689">
    <property type="entry name" value="Iron_dep_repressor"/>
</dbReference>
<dbReference type="InterPro" id="IPR036388">
    <property type="entry name" value="WH-like_DNA-bd_sf"/>
</dbReference>
<dbReference type="InterPro" id="IPR036390">
    <property type="entry name" value="WH_DNA-bd_sf"/>
</dbReference>
<dbReference type="NCBIfam" id="NF003025">
    <property type="entry name" value="PRK03902.1"/>
    <property type="match status" value="1"/>
</dbReference>
<dbReference type="PANTHER" id="PTHR33238">
    <property type="entry name" value="IRON (METAL) DEPENDENT REPRESSOR, DTXR FAMILY"/>
    <property type="match status" value="1"/>
</dbReference>
<dbReference type="PANTHER" id="PTHR33238:SF11">
    <property type="entry name" value="TRANSCRIPTIONAL REGULATOR MNTR"/>
    <property type="match status" value="1"/>
</dbReference>
<dbReference type="Pfam" id="PF02742">
    <property type="entry name" value="Fe_dep_repr_C"/>
    <property type="match status" value="1"/>
</dbReference>
<dbReference type="Pfam" id="PF01325">
    <property type="entry name" value="Fe_dep_repress"/>
    <property type="match status" value="1"/>
</dbReference>
<dbReference type="SMART" id="SM00529">
    <property type="entry name" value="HTH_DTXR"/>
    <property type="match status" value="1"/>
</dbReference>
<dbReference type="SUPFAM" id="SSF47979">
    <property type="entry name" value="Iron-dependent repressor protein, dimerization domain"/>
    <property type="match status" value="1"/>
</dbReference>
<dbReference type="SUPFAM" id="SSF46785">
    <property type="entry name" value="Winged helix' DNA-binding domain"/>
    <property type="match status" value="1"/>
</dbReference>
<dbReference type="PROSITE" id="PS50944">
    <property type="entry name" value="HTH_DTXR"/>
    <property type="match status" value="1"/>
</dbReference>
<comment type="function">
    <text evidence="1">Central regulator of manganese homeostasis.</text>
</comment>
<comment type="activity regulation">
    <text evidence="1">DNA binding is strongly activated by Mn(2+).</text>
</comment>
<comment type="subunit">
    <text evidence="1">Homodimer.</text>
</comment>
<comment type="subcellular location">
    <subcellularLocation>
        <location evidence="1">Cytoplasm</location>
    </subcellularLocation>
</comment>
<comment type="similarity">
    <text evidence="1">Belongs to the DtxR/MntR family.</text>
</comment>
<accession>Q5WF38</accession>
<evidence type="ECO:0000255" key="1">
    <source>
        <dbReference type="HAMAP-Rule" id="MF_00732"/>
    </source>
</evidence>
<gene>
    <name evidence="1" type="primary">mntR</name>
    <name type="ordered locus">ABC2487</name>
</gene>
<organism>
    <name type="scientific">Shouchella clausii (strain KSM-K16)</name>
    <name type="common">Alkalihalobacillus clausii</name>
    <dbReference type="NCBI Taxonomy" id="66692"/>
    <lineage>
        <taxon>Bacteria</taxon>
        <taxon>Bacillati</taxon>
        <taxon>Bacillota</taxon>
        <taxon>Bacilli</taxon>
        <taxon>Bacillales</taxon>
        <taxon>Bacillaceae</taxon>
        <taxon>Shouchella</taxon>
    </lineage>
</organism>